<protein>
    <recommendedName>
        <fullName evidence="1">N-acetylneuraminate lyase</fullName>
        <shortName evidence="1">NAL</shortName>
        <shortName evidence="1">Neu5Ac lyase</shortName>
        <ecNumber evidence="1">4.1.3.3</ecNumber>
    </recommendedName>
    <alternativeName>
        <fullName evidence="1">N-acetylneuraminate pyruvate-lyase</fullName>
    </alternativeName>
    <alternativeName>
        <fullName evidence="1">N-acetylneuraminic acid aldolase</fullName>
    </alternativeName>
    <alternativeName>
        <fullName evidence="1">Sialate lyase</fullName>
    </alternativeName>
    <alternativeName>
        <fullName evidence="1">Sialic acid aldolase</fullName>
    </alternativeName>
    <alternativeName>
        <fullName evidence="1">Sialic acid lyase</fullName>
    </alternativeName>
</protein>
<keyword id="KW-0119">Carbohydrate metabolism</keyword>
<keyword id="KW-0963">Cytoplasm</keyword>
<keyword id="KW-0456">Lyase</keyword>
<keyword id="KW-0704">Schiff base</keyword>
<accession>B5FIR8</accession>
<organism>
    <name type="scientific">Salmonella dublin (strain CT_02021853)</name>
    <dbReference type="NCBI Taxonomy" id="439851"/>
    <lineage>
        <taxon>Bacteria</taxon>
        <taxon>Pseudomonadati</taxon>
        <taxon>Pseudomonadota</taxon>
        <taxon>Gammaproteobacteria</taxon>
        <taxon>Enterobacterales</taxon>
        <taxon>Enterobacteriaceae</taxon>
        <taxon>Salmonella</taxon>
    </lineage>
</organism>
<name>NANA_SALDC</name>
<sequence>MAKALQGVMAALLTPFDHQQQLDSESLRRLVRFNIGQGIDGLYVGGSTGEAFVQSLAEREQVLEIVAEEAKGKITLIAHVGTVSTAESQQLASAAKRYGFDAVSAVTPFYYPFSFEEHCDHYRAIIDSADGLPMVVYNIPALSGVKLTLDQINTLVTLPGVSALKQTSGDLFQMEQIRRAHPDLVLYNGYDEIFASGLLAGADGGIGSTYNIMGWRYQGIVQALREGDVAKAQRLQTECNKVIDLLIKTGVFRGLKTVLHYMDVLSVPLCRKPFAPVDEKYLPALKALAQQLMEEKA</sequence>
<reference key="1">
    <citation type="journal article" date="2011" name="J. Bacteriol.">
        <title>Comparative genomics of 28 Salmonella enterica isolates: evidence for CRISPR-mediated adaptive sublineage evolution.</title>
        <authorList>
            <person name="Fricke W.F."/>
            <person name="Mammel M.K."/>
            <person name="McDermott P.F."/>
            <person name="Tartera C."/>
            <person name="White D.G."/>
            <person name="Leclerc J.E."/>
            <person name="Ravel J."/>
            <person name="Cebula T.A."/>
        </authorList>
    </citation>
    <scope>NUCLEOTIDE SEQUENCE [LARGE SCALE GENOMIC DNA]</scope>
    <source>
        <strain>CT_02021853</strain>
    </source>
</reference>
<proteinExistence type="inferred from homology"/>
<comment type="function">
    <text evidence="1">Catalyzes the reversible aldol cleavage of N-acetylneuraminic acid (sialic acid; Neu5Ac) to form pyruvate and N-acetylmannosamine (ManNAc) via a Schiff base intermediate.</text>
</comment>
<comment type="catalytic activity">
    <reaction evidence="1">
        <text>aceneuramate = aldehydo-N-acetyl-D-mannosamine + pyruvate</text>
        <dbReference type="Rhea" id="RHEA:23296"/>
        <dbReference type="ChEBI" id="CHEBI:15361"/>
        <dbReference type="ChEBI" id="CHEBI:17122"/>
        <dbReference type="ChEBI" id="CHEBI:173083"/>
        <dbReference type="EC" id="4.1.3.3"/>
    </reaction>
</comment>
<comment type="pathway">
    <text evidence="1">Amino-sugar metabolism; N-acetylneuraminate degradation; D-fructose 6-phosphate from N-acetylneuraminate: step 1/5.</text>
</comment>
<comment type="subunit">
    <text evidence="1">Homotetramer.</text>
</comment>
<comment type="subcellular location">
    <subcellularLocation>
        <location evidence="1">Cytoplasm</location>
    </subcellularLocation>
</comment>
<comment type="similarity">
    <text evidence="1">Belongs to the DapA family. NanA subfamily.</text>
</comment>
<feature type="chain" id="PRO_1000139739" description="N-acetylneuraminate lyase">
    <location>
        <begin position="1"/>
        <end position="297"/>
    </location>
</feature>
<feature type="active site" description="Proton donor" evidence="1">
    <location>
        <position position="137"/>
    </location>
</feature>
<feature type="active site" description="Schiff-base intermediate with substrate" evidence="1">
    <location>
        <position position="165"/>
    </location>
</feature>
<feature type="binding site" evidence="1">
    <location>
        <position position="47"/>
    </location>
    <ligand>
        <name>aceneuramate</name>
        <dbReference type="ChEBI" id="CHEBI:173083"/>
    </ligand>
</feature>
<feature type="binding site" evidence="1">
    <location>
        <position position="48"/>
    </location>
    <ligand>
        <name>aceneuramate</name>
        <dbReference type="ChEBI" id="CHEBI:173083"/>
    </ligand>
</feature>
<feature type="binding site" evidence="1">
    <location>
        <position position="167"/>
    </location>
    <ligand>
        <name>aceneuramate</name>
        <dbReference type="ChEBI" id="CHEBI:173083"/>
    </ligand>
</feature>
<feature type="binding site" evidence="1">
    <location>
        <position position="189"/>
    </location>
    <ligand>
        <name>aceneuramate</name>
        <dbReference type="ChEBI" id="CHEBI:173083"/>
    </ligand>
</feature>
<feature type="binding site" evidence="1">
    <location>
        <position position="191"/>
    </location>
    <ligand>
        <name>aceneuramate</name>
        <dbReference type="ChEBI" id="CHEBI:173083"/>
    </ligand>
</feature>
<feature type="binding site" evidence="1">
    <location>
        <position position="192"/>
    </location>
    <ligand>
        <name>aceneuramate</name>
        <dbReference type="ChEBI" id="CHEBI:173083"/>
    </ligand>
</feature>
<feature type="binding site" evidence="1">
    <location>
        <position position="208"/>
    </location>
    <ligand>
        <name>aceneuramate</name>
        <dbReference type="ChEBI" id="CHEBI:173083"/>
    </ligand>
</feature>
<dbReference type="EC" id="4.1.3.3" evidence="1"/>
<dbReference type="EMBL" id="CP001144">
    <property type="protein sequence ID" value="ACH74774.1"/>
    <property type="molecule type" value="Genomic_DNA"/>
</dbReference>
<dbReference type="RefSeq" id="WP_001029665.1">
    <property type="nucleotide sequence ID" value="NC_011205.1"/>
</dbReference>
<dbReference type="SMR" id="B5FIR8"/>
<dbReference type="KEGG" id="sed:SeD_A3699"/>
<dbReference type="HOGENOM" id="CLU_049343_6_0_6"/>
<dbReference type="UniPathway" id="UPA00629">
    <property type="reaction ID" value="UER00680"/>
</dbReference>
<dbReference type="Proteomes" id="UP000008322">
    <property type="component" value="Chromosome"/>
</dbReference>
<dbReference type="GO" id="GO:0005829">
    <property type="term" value="C:cytosol"/>
    <property type="evidence" value="ECO:0007669"/>
    <property type="project" value="TreeGrafter"/>
</dbReference>
<dbReference type="GO" id="GO:0008747">
    <property type="term" value="F:N-acetylneuraminate lyase activity"/>
    <property type="evidence" value="ECO:0007669"/>
    <property type="project" value="UniProtKB-UniRule"/>
</dbReference>
<dbReference type="GO" id="GO:0005975">
    <property type="term" value="P:carbohydrate metabolic process"/>
    <property type="evidence" value="ECO:0007669"/>
    <property type="project" value="UniProtKB-UniRule"/>
</dbReference>
<dbReference type="GO" id="GO:0019262">
    <property type="term" value="P:N-acetylneuraminate catabolic process"/>
    <property type="evidence" value="ECO:0007669"/>
    <property type="project" value="UniProtKB-UniRule"/>
</dbReference>
<dbReference type="CDD" id="cd00954">
    <property type="entry name" value="NAL"/>
    <property type="match status" value="1"/>
</dbReference>
<dbReference type="FunFam" id="3.20.20.70:FF:000039">
    <property type="entry name" value="N-acetylneuraminate lyase"/>
    <property type="match status" value="1"/>
</dbReference>
<dbReference type="Gene3D" id="3.20.20.70">
    <property type="entry name" value="Aldolase class I"/>
    <property type="match status" value="1"/>
</dbReference>
<dbReference type="HAMAP" id="MF_01237">
    <property type="entry name" value="N_acetylneuram_lyase"/>
    <property type="match status" value="1"/>
</dbReference>
<dbReference type="InterPro" id="IPR013785">
    <property type="entry name" value="Aldolase_TIM"/>
</dbReference>
<dbReference type="InterPro" id="IPR002220">
    <property type="entry name" value="DapA-like"/>
</dbReference>
<dbReference type="InterPro" id="IPR005264">
    <property type="entry name" value="NanA"/>
</dbReference>
<dbReference type="InterPro" id="IPR020625">
    <property type="entry name" value="Schiff_base-form_aldolases_AS"/>
</dbReference>
<dbReference type="InterPro" id="IPR020624">
    <property type="entry name" value="Schiff_base-form_aldolases_CS"/>
</dbReference>
<dbReference type="NCBIfam" id="TIGR00683">
    <property type="entry name" value="nanA"/>
    <property type="match status" value="1"/>
</dbReference>
<dbReference type="NCBIfam" id="NF003164">
    <property type="entry name" value="PRK04147.1"/>
    <property type="match status" value="1"/>
</dbReference>
<dbReference type="PANTHER" id="PTHR42849">
    <property type="entry name" value="N-ACETYLNEURAMINATE LYASE"/>
    <property type="match status" value="1"/>
</dbReference>
<dbReference type="PANTHER" id="PTHR42849:SF1">
    <property type="entry name" value="N-ACETYLNEURAMINATE LYASE"/>
    <property type="match status" value="1"/>
</dbReference>
<dbReference type="Pfam" id="PF00701">
    <property type="entry name" value="DHDPS"/>
    <property type="match status" value="1"/>
</dbReference>
<dbReference type="PIRSF" id="PIRSF001365">
    <property type="entry name" value="DHDPS"/>
    <property type="match status" value="1"/>
</dbReference>
<dbReference type="PRINTS" id="PR00146">
    <property type="entry name" value="DHPICSNTHASE"/>
</dbReference>
<dbReference type="SMART" id="SM01130">
    <property type="entry name" value="DHDPS"/>
    <property type="match status" value="1"/>
</dbReference>
<dbReference type="SUPFAM" id="SSF51569">
    <property type="entry name" value="Aldolase"/>
    <property type="match status" value="1"/>
</dbReference>
<dbReference type="PROSITE" id="PS00665">
    <property type="entry name" value="DHDPS_1"/>
    <property type="match status" value="1"/>
</dbReference>
<dbReference type="PROSITE" id="PS00666">
    <property type="entry name" value="DHDPS_2"/>
    <property type="match status" value="1"/>
</dbReference>
<gene>
    <name evidence="1" type="primary">nanA</name>
    <name type="ordered locus">SeD_A3699</name>
</gene>
<evidence type="ECO:0000255" key="1">
    <source>
        <dbReference type="HAMAP-Rule" id="MF_01237"/>
    </source>
</evidence>